<gene>
    <name evidence="1" type="primary">hisH2</name>
    <name type="ordered locus">lpp1198</name>
</gene>
<reference key="1">
    <citation type="journal article" date="2004" name="Nat. Genet.">
        <title>Evidence in the Legionella pneumophila genome for exploitation of host cell functions and high genome plasticity.</title>
        <authorList>
            <person name="Cazalet C."/>
            <person name="Rusniok C."/>
            <person name="Brueggemann H."/>
            <person name="Zidane N."/>
            <person name="Magnier A."/>
            <person name="Ma L."/>
            <person name="Tichit M."/>
            <person name="Jarraud S."/>
            <person name="Bouchier C."/>
            <person name="Vandenesch F."/>
            <person name="Kunst F."/>
            <person name="Etienne J."/>
            <person name="Glaser P."/>
            <person name="Buchrieser C."/>
        </authorList>
    </citation>
    <scope>NUCLEOTIDE SEQUENCE [LARGE SCALE GENOMIC DNA]</scope>
    <source>
        <strain>Paris</strain>
    </source>
</reference>
<proteinExistence type="inferred from homology"/>
<feature type="chain" id="PRO_0000231731" description="Imidazole glycerol phosphate synthase subunit HisH 2">
    <location>
        <begin position="1"/>
        <end position="199"/>
    </location>
</feature>
<feature type="domain" description="Glutamine amidotransferase type-1" evidence="1">
    <location>
        <begin position="1"/>
        <end position="199"/>
    </location>
</feature>
<feature type="active site" description="Nucleophile" evidence="1">
    <location>
        <position position="76"/>
    </location>
</feature>
<feature type="active site" evidence="1">
    <location>
        <position position="177"/>
    </location>
</feature>
<feature type="active site" evidence="1">
    <location>
        <position position="179"/>
    </location>
</feature>
<organism>
    <name type="scientific">Legionella pneumophila (strain Paris)</name>
    <dbReference type="NCBI Taxonomy" id="297246"/>
    <lineage>
        <taxon>Bacteria</taxon>
        <taxon>Pseudomonadati</taxon>
        <taxon>Pseudomonadota</taxon>
        <taxon>Gammaproteobacteria</taxon>
        <taxon>Legionellales</taxon>
        <taxon>Legionellaceae</taxon>
        <taxon>Legionella</taxon>
    </lineage>
</organism>
<protein>
    <recommendedName>
        <fullName evidence="1">Imidazole glycerol phosphate synthase subunit HisH 2</fullName>
        <ecNumber evidence="1">4.3.2.10</ecNumber>
    </recommendedName>
    <alternativeName>
        <fullName evidence="1">IGP synthase glutaminase subunit 2</fullName>
        <ecNumber evidence="1">3.5.1.2</ecNumber>
    </alternativeName>
    <alternativeName>
        <fullName evidence="1">IGP synthase subunit HisH 2</fullName>
    </alternativeName>
    <alternativeName>
        <fullName evidence="1">ImGP synthase subunit HisH 2</fullName>
        <shortName evidence="1">IGPS subunit HisH 2</shortName>
    </alternativeName>
</protein>
<name>HIS52_LEGPA</name>
<comment type="function">
    <text evidence="1">IGPS catalyzes the conversion of PRFAR and glutamine to IGP, AICAR and glutamate. The HisH subunit provides the glutamine amidotransferase activity that produces the ammonia necessary to HisF for the synthesis of IGP and AICAR.</text>
</comment>
<comment type="catalytic activity">
    <reaction evidence="1">
        <text>5-[(5-phospho-1-deoxy-D-ribulos-1-ylimino)methylamino]-1-(5-phospho-beta-D-ribosyl)imidazole-4-carboxamide + L-glutamine = D-erythro-1-(imidazol-4-yl)glycerol 3-phosphate + 5-amino-1-(5-phospho-beta-D-ribosyl)imidazole-4-carboxamide + L-glutamate + H(+)</text>
        <dbReference type="Rhea" id="RHEA:24793"/>
        <dbReference type="ChEBI" id="CHEBI:15378"/>
        <dbReference type="ChEBI" id="CHEBI:29985"/>
        <dbReference type="ChEBI" id="CHEBI:58278"/>
        <dbReference type="ChEBI" id="CHEBI:58359"/>
        <dbReference type="ChEBI" id="CHEBI:58475"/>
        <dbReference type="ChEBI" id="CHEBI:58525"/>
        <dbReference type="EC" id="4.3.2.10"/>
    </reaction>
</comment>
<comment type="catalytic activity">
    <reaction evidence="1">
        <text>L-glutamine + H2O = L-glutamate + NH4(+)</text>
        <dbReference type="Rhea" id="RHEA:15889"/>
        <dbReference type="ChEBI" id="CHEBI:15377"/>
        <dbReference type="ChEBI" id="CHEBI:28938"/>
        <dbReference type="ChEBI" id="CHEBI:29985"/>
        <dbReference type="ChEBI" id="CHEBI:58359"/>
        <dbReference type="EC" id="3.5.1.2"/>
    </reaction>
</comment>
<comment type="pathway">
    <text evidence="1">Amino-acid biosynthesis; L-histidine biosynthesis; L-histidine from 5-phospho-alpha-D-ribose 1-diphosphate: step 5/9.</text>
</comment>
<comment type="subunit">
    <text evidence="1">Heterodimer of HisH and HisF.</text>
</comment>
<comment type="subcellular location">
    <subcellularLocation>
        <location evidence="1">Cytoplasm</location>
    </subcellularLocation>
</comment>
<keyword id="KW-0028">Amino-acid biosynthesis</keyword>
<keyword id="KW-0963">Cytoplasm</keyword>
<keyword id="KW-0315">Glutamine amidotransferase</keyword>
<keyword id="KW-0368">Histidine biosynthesis</keyword>
<keyword id="KW-0378">Hydrolase</keyword>
<keyword id="KW-0456">Lyase</keyword>
<evidence type="ECO:0000255" key="1">
    <source>
        <dbReference type="HAMAP-Rule" id="MF_00278"/>
    </source>
</evidence>
<sequence>MIAVIDVSGNNLTSLTNALIRLGGHFALTHDAEEIQKASHVILPGVGTARSGMTALQQNGLIDVLRTLTQPLLGICLGMQLLLEYSEEDDIPCLGLIPGVAELLKAERNHPVPHMGWNNLHWQKTSSLQQGLNNSDYVYFVHSYALKADDYALARCQYHEEFTAVVKKGNFYGMQFHPEKSADVGMVLLNNFLSLESTC</sequence>
<dbReference type="EC" id="4.3.2.10" evidence="1"/>
<dbReference type="EC" id="3.5.1.2" evidence="1"/>
<dbReference type="EMBL" id="CR628336">
    <property type="protein sequence ID" value="CAH12349.1"/>
    <property type="molecule type" value="Genomic_DNA"/>
</dbReference>
<dbReference type="SMR" id="Q5X5X2"/>
<dbReference type="MEROPS" id="C26.965"/>
<dbReference type="KEGG" id="lpp:lpp1198"/>
<dbReference type="LegioList" id="lpp1198"/>
<dbReference type="HOGENOM" id="CLU_071837_0_0_6"/>
<dbReference type="UniPathway" id="UPA00031">
    <property type="reaction ID" value="UER00010"/>
</dbReference>
<dbReference type="GO" id="GO:0005737">
    <property type="term" value="C:cytoplasm"/>
    <property type="evidence" value="ECO:0007669"/>
    <property type="project" value="UniProtKB-SubCell"/>
</dbReference>
<dbReference type="GO" id="GO:0004359">
    <property type="term" value="F:glutaminase activity"/>
    <property type="evidence" value="ECO:0007669"/>
    <property type="project" value="UniProtKB-EC"/>
</dbReference>
<dbReference type="GO" id="GO:0000107">
    <property type="term" value="F:imidazoleglycerol-phosphate synthase activity"/>
    <property type="evidence" value="ECO:0007669"/>
    <property type="project" value="UniProtKB-UniRule"/>
</dbReference>
<dbReference type="GO" id="GO:0016829">
    <property type="term" value="F:lyase activity"/>
    <property type="evidence" value="ECO:0007669"/>
    <property type="project" value="UniProtKB-KW"/>
</dbReference>
<dbReference type="GO" id="GO:0000105">
    <property type="term" value="P:L-histidine biosynthetic process"/>
    <property type="evidence" value="ECO:0007669"/>
    <property type="project" value="UniProtKB-UniRule"/>
</dbReference>
<dbReference type="CDD" id="cd01748">
    <property type="entry name" value="GATase1_IGP_Synthase"/>
    <property type="match status" value="1"/>
</dbReference>
<dbReference type="FunFam" id="3.40.50.880:FF:000009">
    <property type="entry name" value="Imidazole glycerol phosphate synthase subunit HisH"/>
    <property type="match status" value="1"/>
</dbReference>
<dbReference type="Gene3D" id="3.40.50.880">
    <property type="match status" value="1"/>
</dbReference>
<dbReference type="HAMAP" id="MF_00278">
    <property type="entry name" value="HisH"/>
    <property type="match status" value="1"/>
</dbReference>
<dbReference type="InterPro" id="IPR029062">
    <property type="entry name" value="Class_I_gatase-like"/>
</dbReference>
<dbReference type="InterPro" id="IPR017926">
    <property type="entry name" value="GATASE"/>
</dbReference>
<dbReference type="InterPro" id="IPR010139">
    <property type="entry name" value="Imidazole-glycPsynth_HisH"/>
</dbReference>
<dbReference type="NCBIfam" id="TIGR01855">
    <property type="entry name" value="IMP_synth_hisH"/>
    <property type="match status" value="1"/>
</dbReference>
<dbReference type="PANTHER" id="PTHR42701">
    <property type="entry name" value="IMIDAZOLE GLYCEROL PHOSPHATE SYNTHASE SUBUNIT HISH"/>
    <property type="match status" value="1"/>
</dbReference>
<dbReference type="PANTHER" id="PTHR42701:SF1">
    <property type="entry name" value="IMIDAZOLE GLYCEROL PHOSPHATE SYNTHASE SUBUNIT HISH"/>
    <property type="match status" value="1"/>
</dbReference>
<dbReference type="Pfam" id="PF00117">
    <property type="entry name" value="GATase"/>
    <property type="match status" value="1"/>
</dbReference>
<dbReference type="PIRSF" id="PIRSF000495">
    <property type="entry name" value="Amidotransf_hisH"/>
    <property type="match status" value="1"/>
</dbReference>
<dbReference type="PRINTS" id="PR00097">
    <property type="entry name" value="ANTSNTHASEII"/>
</dbReference>
<dbReference type="SUPFAM" id="SSF52317">
    <property type="entry name" value="Class I glutamine amidotransferase-like"/>
    <property type="match status" value="1"/>
</dbReference>
<dbReference type="PROSITE" id="PS51273">
    <property type="entry name" value="GATASE_TYPE_1"/>
    <property type="match status" value="1"/>
</dbReference>
<accession>Q5X5X2</accession>